<sequence length="562" mass="60022">MRSDMIKKGDHQAPARSLLHATGALKSPTDMNKPFVAICNSYIDIVPGHVHLRELADIAKEAIREAGAIPFEFNTIGVDDGIAMGHIGMRYSLPSREIIADAAETVINAHWFDGVFYIPNCDKITPGMILAAMRTNVPAIFCSGGPMKAGLSAHGKALTLSSMFEAVGAFKEGSISKEEFLDMEQNACPTCGSCAGMFTANSMNCLMEVLGLALPYNGTALAVSDQRREMIRQAAFKLVENIKNDLKPRDIVTREAIDDAFALDMAMGGSTNTVLHTLAIANEAGIDYDLERINAIAKRTPYLSKIAPSSSYSMHDVHEAGGVPAIINELMKKDGTLHPDRITVTGKTLRENNEGKEIKNFDVIHPLDAPYDAQGGLSILFGNIAPKGAVIKVGGVDPSIKTFTGKAICFNSHDEAVEAIDNRTVRAGHVVVIRYEGPKGGPGMPEMLAPTSSIVGRGLGKDVALITDGRFSGATRGIAVGHISPEAASGGPIALIEDGDEITIDLTNRTLNVNQPEDVLARRRESLTPFKAKVKTGYLARYTALVTSANTGGVMQVPENLI</sequence>
<comment type="function">
    <text evidence="1">Functions in the biosynthesis of branched-chain amino acids. Catalyzes the dehydration of (2R,3R)-2,3-dihydroxy-3-methylpentanoate (2,3-dihydroxy-3-methylvalerate) into 2-oxo-3-methylpentanoate (2-oxo-3-methylvalerate) and of (2R)-2,3-dihydroxy-3-methylbutanoate (2,3-dihydroxyisovalerate) into 2-oxo-3-methylbutanoate (2-oxoisovalerate), the penultimate precursor to L-isoleucine and L-valine, respectively.</text>
</comment>
<comment type="catalytic activity">
    <reaction evidence="1">
        <text>(2R)-2,3-dihydroxy-3-methylbutanoate = 3-methyl-2-oxobutanoate + H2O</text>
        <dbReference type="Rhea" id="RHEA:24809"/>
        <dbReference type="ChEBI" id="CHEBI:11851"/>
        <dbReference type="ChEBI" id="CHEBI:15377"/>
        <dbReference type="ChEBI" id="CHEBI:49072"/>
        <dbReference type="EC" id="4.2.1.9"/>
    </reaction>
    <physiologicalReaction direction="left-to-right" evidence="1">
        <dbReference type="Rhea" id="RHEA:24810"/>
    </physiologicalReaction>
</comment>
<comment type="catalytic activity">
    <reaction evidence="1">
        <text>(2R,3R)-2,3-dihydroxy-3-methylpentanoate = (S)-3-methyl-2-oxopentanoate + H2O</text>
        <dbReference type="Rhea" id="RHEA:27694"/>
        <dbReference type="ChEBI" id="CHEBI:15377"/>
        <dbReference type="ChEBI" id="CHEBI:35146"/>
        <dbReference type="ChEBI" id="CHEBI:49258"/>
        <dbReference type="EC" id="4.2.1.9"/>
    </reaction>
    <physiologicalReaction direction="left-to-right" evidence="1">
        <dbReference type="Rhea" id="RHEA:27695"/>
    </physiologicalReaction>
</comment>
<comment type="cofactor">
    <cofactor evidence="1">
        <name>[2Fe-2S] cluster</name>
        <dbReference type="ChEBI" id="CHEBI:190135"/>
    </cofactor>
    <text evidence="1">Binds 1 [2Fe-2S] cluster per subunit. This cluster acts as a Lewis acid cofactor.</text>
</comment>
<comment type="cofactor">
    <cofactor evidence="1">
        <name>Mg(2+)</name>
        <dbReference type="ChEBI" id="CHEBI:18420"/>
    </cofactor>
</comment>
<comment type="pathway">
    <text evidence="1">Amino-acid biosynthesis; L-isoleucine biosynthesis; L-isoleucine from 2-oxobutanoate: step 3/4.</text>
</comment>
<comment type="pathway">
    <text evidence="1">Amino-acid biosynthesis; L-valine biosynthesis; L-valine from pyruvate: step 3/4.</text>
</comment>
<comment type="subunit">
    <text evidence="1">Homodimer.</text>
</comment>
<comment type="similarity">
    <text evidence="1">Belongs to the IlvD/Edd family.</text>
</comment>
<feature type="chain" id="PRO_0000103506" description="Dihydroxy-acid dehydratase">
    <location>
        <begin position="1"/>
        <end position="562"/>
    </location>
</feature>
<feature type="active site" description="Proton acceptor" evidence="1">
    <location>
        <position position="472"/>
    </location>
</feature>
<feature type="binding site" evidence="1">
    <location>
        <position position="80"/>
    </location>
    <ligand>
        <name>Mg(2+)</name>
        <dbReference type="ChEBI" id="CHEBI:18420"/>
    </ligand>
</feature>
<feature type="binding site" evidence="1">
    <location>
        <position position="121"/>
    </location>
    <ligand>
        <name>[2Fe-2S] cluster</name>
        <dbReference type="ChEBI" id="CHEBI:190135"/>
    </ligand>
</feature>
<feature type="binding site" evidence="1">
    <location>
        <position position="122"/>
    </location>
    <ligand>
        <name>Mg(2+)</name>
        <dbReference type="ChEBI" id="CHEBI:18420"/>
    </ligand>
</feature>
<feature type="binding site" description="via carbamate group" evidence="1">
    <location>
        <position position="123"/>
    </location>
    <ligand>
        <name>Mg(2+)</name>
        <dbReference type="ChEBI" id="CHEBI:18420"/>
    </ligand>
</feature>
<feature type="binding site" evidence="1">
    <location>
        <position position="194"/>
    </location>
    <ligand>
        <name>[2Fe-2S] cluster</name>
        <dbReference type="ChEBI" id="CHEBI:190135"/>
    </ligand>
</feature>
<feature type="binding site" evidence="1">
    <location>
        <position position="446"/>
    </location>
    <ligand>
        <name>Mg(2+)</name>
        <dbReference type="ChEBI" id="CHEBI:18420"/>
    </ligand>
</feature>
<feature type="modified residue" description="N6-carboxylysine" evidence="1">
    <location>
        <position position="123"/>
    </location>
</feature>
<accession>P65156</accession>
<accession>Q99SJ9</accession>
<dbReference type="EC" id="4.2.1.9" evidence="1"/>
<dbReference type="EMBL" id="BA000017">
    <property type="protein sequence ID" value="BAB58215.1"/>
    <property type="molecule type" value="Genomic_DNA"/>
</dbReference>
<dbReference type="RefSeq" id="WP_001255780.1">
    <property type="nucleotide sequence ID" value="NC_002758.2"/>
</dbReference>
<dbReference type="SMR" id="P65156"/>
<dbReference type="KEGG" id="sav:SAV2053"/>
<dbReference type="HOGENOM" id="CLU_014271_4_2_9"/>
<dbReference type="PhylomeDB" id="P65156"/>
<dbReference type="UniPathway" id="UPA00047">
    <property type="reaction ID" value="UER00057"/>
</dbReference>
<dbReference type="UniPathway" id="UPA00049">
    <property type="reaction ID" value="UER00061"/>
</dbReference>
<dbReference type="Proteomes" id="UP000002481">
    <property type="component" value="Chromosome"/>
</dbReference>
<dbReference type="GO" id="GO:0005829">
    <property type="term" value="C:cytosol"/>
    <property type="evidence" value="ECO:0007669"/>
    <property type="project" value="TreeGrafter"/>
</dbReference>
<dbReference type="GO" id="GO:0051537">
    <property type="term" value="F:2 iron, 2 sulfur cluster binding"/>
    <property type="evidence" value="ECO:0007669"/>
    <property type="project" value="UniProtKB-UniRule"/>
</dbReference>
<dbReference type="GO" id="GO:0004160">
    <property type="term" value="F:dihydroxy-acid dehydratase activity"/>
    <property type="evidence" value="ECO:0007669"/>
    <property type="project" value="UniProtKB-UniRule"/>
</dbReference>
<dbReference type="GO" id="GO:0000287">
    <property type="term" value="F:magnesium ion binding"/>
    <property type="evidence" value="ECO:0007669"/>
    <property type="project" value="UniProtKB-UniRule"/>
</dbReference>
<dbReference type="GO" id="GO:0009097">
    <property type="term" value="P:isoleucine biosynthetic process"/>
    <property type="evidence" value="ECO:0007669"/>
    <property type="project" value="UniProtKB-UniRule"/>
</dbReference>
<dbReference type="GO" id="GO:0009099">
    <property type="term" value="P:L-valine biosynthetic process"/>
    <property type="evidence" value="ECO:0007669"/>
    <property type="project" value="UniProtKB-UniRule"/>
</dbReference>
<dbReference type="FunFam" id="3.50.30.80:FF:000001">
    <property type="entry name" value="Dihydroxy-acid dehydratase"/>
    <property type="match status" value="1"/>
</dbReference>
<dbReference type="Gene3D" id="3.50.30.80">
    <property type="entry name" value="IlvD/EDD C-terminal domain-like"/>
    <property type="match status" value="1"/>
</dbReference>
<dbReference type="HAMAP" id="MF_00012">
    <property type="entry name" value="IlvD"/>
    <property type="match status" value="1"/>
</dbReference>
<dbReference type="InterPro" id="IPR042096">
    <property type="entry name" value="Dihydro-acid_dehy_C"/>
</dbReference>
<dbReference type="InterPro" id="IPR004404">
    <property type="entry name" value="DihydroxyA_deHydtase"/>
</dbReference>
<dbReference type="InterPro" id="IPR020558">
    <property type="entry name" value="DiOHA_6PGluconate_deHydtase_CS"/>
</dbReference>
<dbReference type="InterPro" id="IPR056740">
    <property type="entry name" value="ILV_EDD_C"/>
</dbReference>
<dbReference type="InterPro" id="IPR000581">
    <property type="entry name" value="ILV_EDD_N"/>
</dbReference>
<dbReference type="InterPro" id="IPR037237">
    <property type="entry name" value="IlvD/EDD_N"/>
</dbReference>
<dbReference type="NCBIfam" id="TIGR00110">
    <property type="entry name" value="ilvD"/>
    <property type="match status" value="1"/>
</dbReference>
<dbReference type="NCBIfam" id="NF002068">
    <property type="entry name" value="PRK00911.1"/>
    <property type="match status" value="1"/>
</dbReference>
<dbReference type="PANTHER" id="PTHR43661">
    <property type="entry name" value="D-XYLONATE DEHYDRATASE"/>
    <property type="match status" value="1"/>
</dbReference>
<dbReference type="PANTHER" id="PTHR43661:SF3">
    <property type="entry name" value="D-XYLONATE DEHYDRATASE YAGF-RELATED"/>
    <property type="match status" value="1"/>
</dbReference>
<dbReference type="Pfam" id="PF24877">
    <property type="entry name" value="ILV_EDD_C"/>
    <property type="match status" value="1"/>
</dbReference>
<dbReference type="Pfam" id="PF00920">
    <property type="entry name" value="ILVD_EDD_N"/>
    <property type="match status" value="1"/>
</dbReference>
<dbReference type="SUPFAM" id="SSF143975">
    <property type="entry name" value="IlvD/EDD N-terminal domain-like"/>
    <property type="match status" value="1"/>
</dbReference>
<dbReference type="SUPFAM" id="SSF52016">
    <property type="entry name" value="LeuD/IlvD-like"/>
    <property type="match status" value="1"/>
</dbReference>
<dbReference type="PROSITE" id="PS00886">
    <property type="entry name" value="ILVD_EDD_1"/>
    <property type="match status" value="1"/>
</dbReference>
<dbReference type="PROSITE" id="PS00887">
    <property type="entry name" value="ILVD_EDD_2"/>
    <property type="match status" value="1"/>
</dbReference>
<gene>
    <name evidence="1" type="primary">ilvD</name>
    <name type="ordered locus">SAV2053</name>
</gene>
<reference key="1">
    <citation type="journal article" date="2001" name="Lancet">
        <title>Whole genome sequencing of meticillin-resistant Staphylococcus aureus.</title>
        <authorList>
            <person name="Kuroda M."/>
            <person name="Ohta T."/>
            <person name="Uchiyama I."/>
            <person name="Baba T."/>
            <person name="Yuzawa H."/>
            <person name="Kobayashi I."/>
            <person name="Cui L."/>
            <person name="Oguchi A."/>
            <person name="Aoki K."/>
            <person name="Nagai Y."/>
            <person name="Lian J.-Q."/>
            <person name="Ito T."/>
            <person name="Kanamori M."/>
            <person name="Matsumaru H."/>
            <person name="Maruyama A."/>
            <person name="Murakami H."/>
            <person name="Hosoyama A."/>
            <person name="Mizutani-Ui Y."/>
            <person name="Takahashi N.K."/>
            <person name="Sawano T."/>
            <person name="Inoue R."/>
            <person name="Kaito C."/>
            <person name="Sekimizu K."/>
            <person name="Hirakawa H."/>
            <person name="Kuhara S."/>
            <person name="Goto S."/>
            <person name="Yabuzaki J."/>
            <person name="Kanehisa M."/>
            <person name="Yamashita A."/>
            <person name="Oshima K."/>
            <person name="Furuya K."/>
            <person name="Yoshino C."/>
            <person name="Shiba T."/>
            <person name="Hattori M."/>
            <person name="Ogasawara N."/>
            <person name="Hayashi H."/>
            <person name="Hiramatsu K."/>
        </authorList>
    </citation>
    <scope>NUCLEOTIDE SEQUENCE [LARGE SCALE GENOMIC DNA]</scope>
    <source>
        <strain>Mu50 / ATCC 700699</strain>
    </source>
</reference>
<name>ILVD_STAAM</name>
<organism>
    <name type="scientific">Staphylococcus aureus (strain Mu50 / ATCC 700699)</name>
    <dbReference type="NCBI Taxonomy" id="158878"/>
    <lineage>
        <taxon>Bacteria</taxon>
        <taxon>Bacillati</taxon>
        <taxon>Bacillota</taxon>
        <taxon>Bacilli</taxon>
        <taxon>Bacillales</taxon>
        <taxon>Staphylococcaceae</taxon>
        <taxon>Staphylococcus</taxon>
    </lineage>
</organism>
<evidence type="ECO:0000255" key="1">
    <source>
        <dbReference type="HAMAP-Rule" id="MF_00012"/>
    </source>
</evidence>
<keyword id="KW-0001">2Fe-2S</keyword>
<keyword id="KW-0028">Amino-acid biosynthesis</keyword>
<keyword id="KW-0100">Branched-chain amino acid biosynthesis</keyword>
<keyword id="KW-0408">Iron</keyword>
<keyword id="KW-0411">Iron-sulfur</keyword>
<keyword id="KW-0456">Lyase</keyword>
<keyword id="KW-0460">Magnesium</keyword>
<keyword id="KW-0479">Metal-binding</keyword>
<protein>
    <recommendedName>
        <fullName evidence="1">Dihydroxy-acid dehydratase</fullName>
        <shortName evidence="1">DAD</shortName>
        <ecNumber evidence="1">4.2.1.9</ecNumber>
    </recommendedName>
</protein>
<proteinExistence type="inferred from homology"/>